<keyword id="KW-0903">Direct protein sequencing</keyword>
<keyword id="KW-1015">Disulfide bond</keyword>
<keyword id="KW-0325">Glycoprotein</keyword>
<keyword id="KW-0646">Protease inhibitor</keyword>
<keyword id="KW-1185">Reference proteome</keyword>
<keyword id="KW-0677">Repeat</keyword>
<keyword id="KW-0964">Secreted</keyword>
<keyword id="KW-0722">Serine protease inhibitor</keyword>
<feature type="chain" id="PRO_0000155405" description="Inter-alpha-trypsin inhibitor">
    <location>
        <begin position="1" status="less than"/>
        <end position="125" status="greater than"/>
    </location>
</feature>
<feature type="domain" description="BPTI/Kunitz inhibitor 1" evidence="1">
    <location>
        <begin position="7"/>
        <end position="57"/>
    </location>
</feature>
<feature type="domain" description="BPTI/Kunitz inhibitor 2" evidence="1">
    <location>
        <begin position="63"/>
        <end position="113"/>
    </location>
</feature>
<feature type="site" description="Reactive bond for chymotrypsin and elastase">
    <location>
        <begin position="17"/>
        <end position="18"/>
    </location>
</feature>
<feature type="site" description="Reactive bond for trypsin">
    <location>
        <begin position="73"/>
        <end position="74"/>
    </location>
</feature>
<feature type="glycosylation site" description="N-linked (GlcNAc...) asparagine">
    <location>
        <position position="26"/>
    </location>
</feature>
<feature type="disulfide bond">
    <location>
        <begin position="7"/>
        <end position="57"/>
    </location>
</feature>
<feature type="disulfide bond">
    <location>
        <begin position="16"/>
        <end position="40"/>
    </location>
</feature>
<feature type="disulfide bond">
    <location>
        <begin position="32"/>
        <end position="53"/>
    </location>
</feature>
<feature type="disulfide bond">
    <location>
        <begin position="63"/>
        <end position="113"/>
    </location>
</feature>
<feature type="disulfide bond">
    <location>
        <begin position="72"/>
        <end position="96"/>
    </location>
</feature>
<feature type="disulfide bond">
    <location>
        <begin position="88"/>
        <end position="109"/>
    </location>
</feature>
<feature type="sequence conflict" description="In Ref. 2; AA sequence." evidence="2" ref="2">
    <original>Q</original>
    <variation>E</variation>
    <location>
        <position position="13"/>
    </location>
</feature>
<feature type="non-terminal residue">
    <location>
        <position position="1"/>
    </location>
</feature>
<feature type="non-terminal residue">
    <location>
        <position position="125"/>
    </location>
</feature>
<dbReference type="PIR" id="A01210">
    <property type="entry name" value="TIHOBI"/>
</dbReference>
<dbReference type="SMR" id="P04365"/>
<dbReference type="STRING" id="9796.ENSECAP00000046787"/>
<dbReference type="MEROPS" id="I02.005"/>
<dbReference type="PaxDb" id="9796-ENSECAP00000046787"/>
<dbReference type="PeptideAtlas" id="P04365"/>
<dbReference type="InParanoid" id="P04365"/>
<dbReference type="Proteomes" id="UP000002281">
    <property type="component" value="Unplaced"/>
</dbReference>
<dbReference type="GO" id="GO:0009986">
    <property type="term" value="C:cell surface"/>
    <property type="evidence" value="ECO:0000318"/>
    <property type="project" value="GO_Central"/>
</dbReference>
<dbReference type="GO" id="GO:0005576">
    <property type="term" value="C:extracellular region"/>
    <property type="evidence" value="ECO:0007669"/>
    <property type="project" value="UniProtKB-SubCell"/>
</dbReference>
<dbReference type="GO" id="GO:0005886">
    <property type="term" value="C:plasma membrane"/>
    <property type="evidence" value="ECO:0000318"/>
    <property type="project" value="GO_Central"/>
</dbReference>
<dbReference type="GO" id="GO:0004867">
    <property type="term" value="F:serine-type endopeptidase inhibitor activity"/>
    <property type="evidence" value="ECO:0000318"/>
    <property type="project" value="GO_Central"/>
</dbReference>
<dbReference type="CDD" id="cd22597">
    <property type="entry name" value="Kunitz_bikunin_2-like"/>
    <property type="match status" value="1"/>
</dbReference>
<dbReference type="FunFam" id="4.10.410.10:FF:000005">
    <property type="entry name" value="Pancreatic trypsin inhibitor"/>
    <property type="match status" value="1"/>
</dbReference>
<dbReference type="Gene3D" id="4.10.410.10">
    <property type="entry name" value="Pancreatic trypsin inhibitor Kunitz domain"/>
    <property type="match status" value="2"/>
</dbReference>
<dbReference type="InterPro" id="IPR029856">
    <property type="entry name" value="AMBP"/>
</dbReference>
<dbReference type="InterPro" id="IPR002223">
    <property type="entry name" value="Kunitz_BPTI"/>
</dbReference>
<dbReference type="InterPro" id="IPR036880">
    <property type="entry name" value="Kunitz_BPTI_sf"/>
</dbReference>
<dbReference type="InterPro" id="IPR020901">
    <property type="entry name" value="Prtase_inh_Kunz-CS"/>
</dbReference>
<dbReference type="PANTHER" id="PTHR46676">
    <property type="entry name" value="PROTEIN AMBP"/>
    <property type="match status" value="1"/>
</dbReference>
<dbReference type="PANTHER" id="PTHR46676:SF1">
    <property type="entry name" value="PROTEIN AMBP"/>
    <property type="match status" value="1"/>
</dbReference>
<dbReference type="Pfam" id="PF00014">
    <property type="entry name" value="Kunitz_BPTI"/>
    <property type="match status" value="2"/>
</dbReference>
<dbReference type="PRINTS" id="PR00759">
    <property type="entry name" value="BASICPTASE"/>
</dbReference>
<dbReference type="SMART" id="SM00131">
    <property type="entry name" value="KU"/>
    <property type="match status" value="2"/>
</dbReference>
<dbReference type="SUPFAM" id="SSF57362">
    <property type="entry name" value="BPTI-like"/>
    <property type="match status" value="2"/>
</dbReference>
<dbReference type="PROSITE" id="PS00280">
    <property type="entry name" value="BPTI_KUNITZ_1"/>
    <property type="match status" value="2"/>
</dbReference>
<dbReference type="PROSITE" id="PS50279">
    <property type="entry name" value="BPTI_KUNITZ_2"/>
    <property type="match status" value="2"/>
</dbReference>
<evidence type="ECO:0000255" key="1">
    <source>
        <dbReference type="PROSITE-ProRule" id="PRU00031"/>
    </source>
</evidence>
<evidence type="ECO:0000305" key="2"/>
<accession>P04365</accession>
<protein>
    <recommendedName>
        <fullName>Inter-alpha-trypsin inhibitor</fullName>
        <shortName>ITI</shortName>
    </recommendedName>
    <alternativeName>
        <fullName>EI-14</fullName>
    </alternativeName>
    <alternativeName>
        <fullName>HI-14</fullName>
    </alternativeName>
    <alternativeName>
        <fullName>Inhibitory fragment of ITI</fullName>
    </alternativeName>
</protein>
<comment type="function">
    <text>This inhibitory fragment, released from native ITI after limited proteolysis with trypsin, contains two homologous domains. Whereas the second domain is a strong inhibitor of trypsin, the first domain interacts weakly with PMN-granulocytic elastase and not at all with pancreatic elastase.</text>
</comment>
<comment type="subcellular location">
    <subcellularLocation>
        <location>Secreted</location>
    </subcellularLocation>
</comment>
<comment type="miscellaneous">
    <text>The amino acid at position p2' (17) appears to determine the specificity of the inhibition of domain I. Inhibitors with methionine in this position interact weakly with chymotrypsin and elastase; those with leucine interact strongly.</text>
</comment>
<name>IATR_HORSE</name>
<reference key="1">
    <citation type="journal article" date="1985" name="Biol. Chem. Hoppe-Seyler">
        <title>Kunitz-type proteinase inhibitors derived by limited proteolysis of the inter-alpha-trypsin inhibitor, X. The amino-acid sequences of the trypsin-released inhibitors from horse and pig inter-alpha-trypsin inhibitors.</title>
        <authorList>
            <person name="Hochstrasser K."/>
            <person name="Wachter E."/>
            <person name="Albrecht G.J."/>
            <person name="Reisinger P."/>
        </authorList>
    </citation>
    <scope>PROTEIN SEQUENCE OF 3-125</scope>
</reference>
<reference key="2">
    <citation type="journal article" date="1992" name="Biochem. Int.">
        <title>Characterization of a trypsin inhibitor from equine urine.</title>
        <authorList>
            <person name="Veeraragavan K."/>
            <person name="Singh K."/>
            <person name="Wachter E."/>
            <person name="Hochstrasser K."/>
        </authorList>
    </citation>
    <scope>PROTEIN SEQUENCE OF 1-31</scope>
    <source>
        <tissue>Urine</tissue>
    </source>
</reference>
<organism>
    <name type="scientific">Equus caballus</name>
    <name type="common">Horse</name>
    <dbReference type="NCBI Taxonomy" id="9796"/>
    <lineage>
        <taxon>Eukaryota</taxon>
        <taxon>Metazoa</taxon>
        <taxon>Chordata</taxon>
        <taxon>Craniata</taxon>
        <taxon>Vertebrata</taxon>
        <taxon>Euteleostomi</taxon>
        <taxon>Mammalia</taxon>
        <taxon>Eutheria</taxon>
        <taxon>Laurasiatheria</taxon>
        <taxon>Perissodactyla</taxon>
        <taxon>Equidae</taxon>
        <taxon>Equus</taxon>
    </lineage>
</organism>
<proteinExistence type="evidence at protein level"/>
<sequence length="125" mass="13726">SKKEDSCQLDHAQGPCLGMISRYFYNGTSMACETFQYGGCLGNGNNFASQKECLQTCRTVAACNLPIVQGPCRAFIRLWAFDAAQGKCVLFTYGGCRGNGNKFYSQKECKEYCGIPGDGDEELLR</sequence>